<gene>
    <name type="ordered locus">BT9727_3692</name>
</gene>
<sequence>MASETVSNHQEKALALLQADAEKILRLIKVQMDHLTMPQCPLYEEVLDTQMFGLSREVDFAVRLGLIAEEQGKAMLGELERELSALHEAFTNKQQ</sequence>
<comment type="similarity">
    <text evidence="1">Belongs to the UPF0358 family.</text>
</comment>
<accession>Q6HEL5</accession>
<organism>
    <name type="scientific">Bacillus thuringiensis subsp. konkukian (strain 97-27)</name>
    <dbReference type="NCBI Taxonomy" id="281309"/>
    <lineage>
        <taxon>Bacteria</taxon>
        <taxon>Bacillati</taxon>
        <taxon>Bacillota</taxon>
        <taxon>Bacilli</taxon>
        <taxon>Bacillales</taxon>
        <taxon>Bacillaceae</taxon>
        <taxon>Bacillus</taxon>
        <taxon>Bacillus cereus group</taxon>
    </lineage>
</organism>
<proteinExistence type="inferred from homology"/>
<evidence type="ECO:0000255" key="1">
    <source>
        <dbReference type="HAMAP-Rule" id="MF_01560"/>
    </source>
</evidence>
<dbReference type="EMBL" id="AE017355">
    <property type="protein sequence ID" value="AAT60665.1"/>
    <property type="molecule type" value="Genomic_DNA"/>
</dbReference>
<dbReference type="RefSeq" id="WP_000135695.1">
    <property type="nucleotide sequence ID" value="NC_005957.1"/>
</dbReference>
<dbReference type="RefSeq" id="YP_038011.1">
    <property type="nucleotide sequence ID" value="NC_005957.1"/>
</dbReference>
<dbReference type="SMR" id="Q6HEL5"/>
<dbReference type="KEGG" id="btk:BT9727_3692"/>
<dbReference type="PATRIC" id="fig|281309.8.peg.3930"/>
<dbReference type="HOGENOM" id="CLU_160493_1_0_9"/>
<dbReference type="PRO" id="PR:Q6HEL5"/>
<dbReference type="Proteomes" id="UP000001301">
    <property type="component" value="Chromosome"/>
</dbReference>
<dbReference type="Gene3D" id="1.10.287.750">
    <property type="entry name" value="SO2669-like"/>
    <property type="match status" value="1"/>
</dbReference>
<dbReference type="HAMAP" id="MF_01560">
    <property type="entry name" value="UPF0358"/>
    <property type="match status" value="1"/>
</dbReference>
<dbReference type="InterPro" id="IPR009983">
    <property type="entry name" value="UPF0358"/>
</dbReference>
<dbReference type="InterPro" id="IPR036270">
    <property type="entry name" value="UPF0358_sf"/>
</dbReference>
<dbReference type="NCBIfam" id="NF010187">
    <property type="entry name" value="PRK13666.1"/>
    <property type="match status" value="1"/>
</dbReference>
<dbReference type="Pfam" id="PF07408">
    <property type="entry name" value="DUF1507"/>
    <property type="match status" value="1"/>
</dbReference>
<dbReference type="SUPFAM" id="SSF140404">
    <property type="entry name" value="EF2458-like"/>
    <property type="match status" value="1"/>
</dbReference>
<protein>
    <recommendedName>
        <fullName evidence="1">UPF0358 protein BT9727_3692</fullName>
    </recommendedName>
</protein>
<reference key="1">
    <citation type="journal article" date="2006" name="J. Bacteriol.">
        <title>Pathogenomic sequence analysis of Bacillus cereus and Bacillus thuringiensis isolates closely related to Bacillus anthracis.</title>
        <authorList>
            <person name="Han C.S."/>
            <person name="Xie G."/>
            <person name="Challacombe J.F."/>
            <person name="Altherr M.R."/>
            <person name="Bhotika S.S."/>
            <person name="Bruce D."/>
            <person name="Campbell C.S."/>
            <person name="Campbell M.L."/>
            <person name="Chen J."/>
            <person name="Chertkov O."/>
            <person name="Cleland C."/>
            <person name="Dimitrijevic M."/>
            <person name="Doggett N.A."/>
            <person name="Fawcett J.J."/>
            <person name="Glavina T."/>
            <person name="Goodwin L.A."/>
            <person name="Hill K.K."/>
            <person name="Hitchcock P."/>
            <person name="Jackson P.J."/>
            <person name="Keim P."/>
            <person name="Kewalramani A.R."/>
            <person name="Longmire J."/>
            <person name="Lucas S."/>
            <person name="Malfatti S."/>
            <person name="McMurry K."/>
            <person name="Meincke L.J."/>
            <person name="Misra M."/>
            <person name="Moseman B.L."/>
            <person name="Mundt M."/>
            <person name="Munk A.C."/>
            <person name="Okinaka R.T."/>
            <person name="Parson-Quintana B."/>
            <person name="Reilly L.P."/>
            <person name="Richardson P."/>
            <person name="Robinson D.L."/>
            <person name="Rubin E."/>
            <person name="Saunders E."/>
            <person name="Tapia R."/>
            <person name="Tesmer J.G."/>
            <person name="Thayer N."/>
            <person name="Thompson L.S."/>
            <person name="Tice H."/>
            <person name="Ticknor L.O."/>
            <person name="Wills P.L."/>
            <person name="Brettin T.S."/>
            <person name="Gilna P."/>
        </authorList>
    </citation>
    <scope>NUCLEOTIDE SEQUENCE [LARGE SCALE GENOMIC DNA]</scope>
    <source>
        <strain>97-27</strain>
    </source>
</reference>
<name>Y3692_BACHK</name>
<feature type="chain" id="PRO_0000110643" description="UPF0358 protein BT9727_3692">
    <location>
        <begin position="1"/>
        <end position="95"/>
    </location>
</feature>